<feature type="initiator methionine" description="Removed" evidence="7">
    <location>
        <position position="1"/>
    </location>
</feature>
<feature type="chain" id="PRO_0000214005" description="Acyl-CoA-binding protein">
    <location>
        <begin position="2"/>
        <end position="87"/>
    </location>
</feature>
<feature type="domain" description="ACB" evidence="3">
    <location>
        <begin position="2"/>
        <end position="87"/>
    </location>
</feature>
<feature type="binding site" evidence="1">
    <location>
        <position position="14"/>
    </location>
    <ligand>
        <name>an acyl-CoA</name>
        <dbReference type="ChEBI" id="CHEBI:58342"/>
    </ligand>
</feature>
<feature type="binding site" evidence="1">
    <location>
        <begin position="29"/>
        <end position="33"/>
    </location>
    <ligand>
        <name>an acyl-CoA</name>
        <dbReference type="ChEBI" id="CHEBI:58342"/>
    </ligand>
</feature>
<feature type="binding site" evidence="1">
    <location>
        <position position="51"/>
    </location>
    <ligand>
        <name>an acyl-CoA</name>
        <dbReference type="ChEBI" id="CHEBI:58342"/>
    </ligand>
</feature>
<feature type="binding site" evidence="1">
    <location>
        <position position="55"/>
    </location>
    <ligand>
        <name>an acyl-CoA</name>
        <dbReference type="ChEBI" id="CHEBI:58342"/>
    </ligand>
</feature>
<feature type="binding site" evidence="1">
    <location>
        <position position="74"/>
    </location>
    <ligand>
        <name>an acyl-CoA</name>
        <dbReference type="ChEBI" id="CHEBI:58342"/>
    </ligand>
</feature>
<feature type="modified residue" description="N-acetylserine" evidence="7">
    <location>
        <position position="2"/>
    </location>
</feature>
<feature type="modified residue" description="N6-acetyllysine; alternate" evidence="2">
    <location>
        <position position="8"/>
    </location>
</feature>
<feature type="modified residue" description="N6-succinyllysine; alternate" evidence="7">
    <location>
        <position position="8"/>
    </location>
</feature>
<feature type="modified residue" description="N6-succinyllysine" evidence="7">
    <location>
        <position position="17"/>
    </location>
</feature>
<feature type="modified residue" description="Phosphotyrosine" evidence="5">
    <location>
        <position position="29"/>
    </location>
</feature>
<feature type="modified residue" description="N6-acetyllysine" evidence="6">
    <location>
        <position position="51"/>
    </location>
</feature>
<feature type="modified residue" description="N6-(2-hydroxyisobutyryl)lysine; alternate" evidence="2">
    <location>
        <position position="55"/>
    </location>
</feature>
<feature type="modified residue" description="N6-acetyllysine; alternate" evidence="6">
    <location>
        <position position="55"/>
    </location>
</feature>
<feature type="modified residue" description="N6-malonyllysine; alternate" evidence="1">
    <location>
        <position position="55"/>
    </location>
</feature>
<feature type="modified residue" description="N6-succinyllysine; alternate" evidence="7">
    <location>
        <position position="55"/>
    </location>
</feature>
<feature type="modified residue" description="N6-succinyllysine" evidence="7">
    <location>
        <position position="61"/>
    </location>
</feature>
<feature type="modified residue" description="N6-acetyllysine; alternate" evidence="2">
    <location>
        <position position="77"/>
    </location>
</feature>
<feature type="modified residue" description="N6-succinyllysine; alternate" evidence="7">
    <location>
        <position position="77"/>
    </location>
</feature>
<keyword id="KW-0007">Acetylation</keyword>
<keyword id="KW-0903">Direct protein sequencing</keyword>
<keyword id="KW-0256">Endoplasmic reticulum</keyword>
<keyword id="KW-0333">Golgi apparatus</keyword>
<keyword id="KW-0379">Hydroxylation</keyword>
<keyword id="KW-0446">Lipid-binding</keyword>
<keyword id="KW-0597">Phosphoprotein</keyword>
<keyword id="KW-1185">Reference proteome</keyword>
<keyword id="KW-0813">Transport</keyword>
<name>ACBP_MOUSE</name>
<sequence length="87" mass="10000">MSQAEFDKAAEEVKRLKTQPTDEEMLFIYSHFKQATVGDVNTDRPGLLDLKGKAKWDSWNKLKGTSKESAMKTYVEKVDELKKKYGI</sequence>
<protein>
    <recommendedName>
        <fullName>Acyl-CoA-binding protein</fullName>
        <shortName>ACBP</shortName>
    </recommendedName>
    <alternativeName>
        <fullName>Diazepam-binding inhibitor</fullName>
        <shortName>DBI</shortName>
    </alternativeName>
    <alternativeName>
        <fullName>Endozepine</fullName>
        <shortName>EP</shortName>
    </alternativeName>
</protein>
<evidence type="ECO:0000250" key="1"/>
<evidence type="ECO:0000250" key="2">
    <source>
        <dbReference type="UniProtKB" id="P07108"/>
    </source>
</evidence>
<evidence type="ECO:0000255" key="3">
    <source>
        <dbReference type="PROSITE-ProRule" id="PRU00573"/>
    </source>
</evidence>
<evidence type="ECO:0000305" key="4"/>
<evidence type="ECO:0007744" key="5">
    <source>
    </source>
</evidence>
<evidence type="ECO:0007744" key="6">
    <source>
    </source>
</evidence>
<evidence type="ECO:0007744" key="7">
    <source>
    </source>
</evidence>
<comment type="function">
    <text>Binds medium- and long-chain acyl-CoA esters with very high affinity and may function as an intracellular carrier of acyl-CoA esters. It is also able to displace diazepam from the benzodiazepine (BZD) recognition site located on the GABA type A receptor. It is therefore possible that this protein also acts as a neuropeptide to modulate the action of the GABA receptor.</text>
</comment>
<comment type="subunit">
    <text>Monomer.</text>
</comment>
<comment type="subcellular location">
    <subcellularLocation>
        <location evidence="2">Endoplasmic reticulum</location>
    </subcellularLocation>
    <subcellularLocation>
        <location evidence="2">Golgi apparatus</location>
    </subcellularLocation>
    <text evidence="2">Golgi localization is dependent on ligand binding.</text>
</comment>
<comment type="similarity">
    <text evidence="4">Belongs to the ACBP family.</text>
</comment>
<reference key="1">
    <citation type="journal article" date="1989" name="Brain Res. Mol. Brain Res.">
        <title>Sequence and expression of the murine diazepam binding inhibitor.</title>
        <authorList>
            <person name="Owens G.P."/>
            <person name="Sinha A.K."/>
            <person name="Sikela J.M."/>
            <person name="Hahn W.E."/>
        </authorList>
    </citation>
    <scope>NUCLEOTIDE SEQUENCE [MRNA]</scope>
</reference>
<reference key="2">
    <citation type="journal article" date="1990" name="Eur. J. Neurosci.">
        <title>A collection of cDNA clones with specific expression patterns in mouse brain.</title>
        <authorList>
            <person name="Kato K."/>
        </authorList>
    </citation>
    <scope>NUCLEOTIDE SEQUENCE [LARGE SCALE MRNA]</scope>
    <source>
        <strain>BALB/cJ</strain>
        <tissue>Brain</tissue>
    </source>
</reference>
<reference key="3">
    <citation type="journal article" date="2005" name="Science">
        <title>The transcriptional landscape of the mammalian genome.</title>
        <authorList>
            <person name="Carninci P."/>
            <person name="Kasukawa T."/>
            <person name="Katayama S."/>
            <person name="Gough J."/>
            <person name="Frith M.C."/>
            <person name="Maeda N."/>
            <person name="Oyama R."/>
            <person name="Ravasi T."/>
            <person name="Lenhard B."/>
            <person name="Wells C."/>
            <person name="Kodzius R."/>
            <person name="Shimokawa K."/>
            <person name="Bajic V.B."/>
            <person name="Brenner S.E."/>
            <person name="Batalov S."/>
            <person name="Forrest A.R."/>
            <person name="Zavolan M."/>
            <person name="Davis M.J."/>
            <person name="Wilming L.G."/>
            <person name="Aidinis V."/>
            <person name="Allen J.E."/>
            <person name="Ambesi-Impiombato A."/>
            <person name="Apweiler R."/>
            <person name="Aturaliya R.N."/>
            <person name="Bailey T.L."/>
            <person name="Bansal M."/>
            <person name="Baxter L."/>
            <person name="Beisel K.W."/>
            <person name="Bersano T."/>
            <person name="Bono H."/>
            <person name="Chalk A.M."/>
            <person name="Chiu K.P."/>
            <person name="Choudhary V."/>
            <person name="Christoffels A."/>
            <person name="Clutterbuck D.R."/>
            <person name="Crowe M.L."/>
            <person name="Dalla E."/>
            <person name="Dalrymple B.P."/>
            <person name="de Bono B."/>
            <person name="Della Gatta G."/>
            <person name="di Bernardo D."/>
            <person name="Down T."/>
            <person name="Engstrom P."/>
            <person name="Fagiolini M."/>
            <person name="Faulkner G."/>
            <person name="Fletcher C.F."/>
            <person name="Fukushima T."/>
            <person name="Furuno M."/>
            <person name="Futaki S."/>
            <person name="Gariboldi M."/>
            <person name="Georgii-Hemming P."/>
            <person name="Gingeras T.R."/>
            <person name="Gojobori T."/>
            <person name="Green R.E."/>
            <person name="Gustincich S."/>
            <person name="Harbers M."/>
            <person name="Hayashi Y."/>
            <person name="Hensch T.K."/>
            <person name="Hirokawa N."/>
            <person name="Hill D."/>
            <person name="Huminiecki L."/>
            <person name="Iacono M."/>
            <person name="Ikeo K."/>
            <person name="Iwama A."/>
            <person name="Ishikawa T."/>
            <person name="Jakt M."/>
            <person name="Kanapin A."/>
            <person name="Katoh M."/>
            <person name="Kawasawa Y."/>
            <person name="Kelso J."/>
            <person name="Kitamura H."/>
            <person name="Kitano H."/>
            <person name="Kollias G."/>
            <person name="Krishnan S.P."/>
            <person name="Kruger A."/>
            <person name="Kummerfeld S.K."/>
            <person name="Kurochkin I.V."/>
            <person name="Lareau L.F."/>
            <person name="Lazarevic D."/>
            <person name="Lipovich L."/>
            <person name="Liu J."/>
            <person name="Liuni S."/>
            <person name="McWilliam S."/>
            <person name="Madan Babu M."/>
            <person name="Madera M."/>
            <person name="Marchionni L."/>
            <person name="Matsuda H."/>
            <person name="Matsuzawa S."/>
            <person name="Miki H."/>
            <person name="Mignone F."/>
            <person name="Miyake S."/>
            <person name="Morris K."/>
            <person name="Mottagui-Tabar S."/>
            <person name="Mulder N."/>
            <person name="Nakano N."/>
            <person name="Nakauchi H."/>
            <person name="Ng P."/>
            <person name="Nilsson R."/>
            <person name="Nishiguchi S."/>
            <person name="Nishikawa S."/>
            <person name="Nori F."/>
            <person name="Ohara O."/>
            <person name="Okazaki Y."/>
            <person name="Orlando V."/>
            <person name="Pang K.C."/>
            <person name="Pavan W.J."/>
            <person name="Pavesi G."/>
            <person name="Pesole G."/>
            <person name="Petrovsky N."/>
            <person name="Piazza S."/>
            <person name="Reed J."/>
            <person name="Reid J.F."/>
            <person name="Ring B.Z."/>
            <person name="Ringwald M."/>
            <person name="Rost B."/>
            <person name="Ruan Y."/>
            <person name="Salzberg S.L."/>
            <person name="Sandelin A."/>
            <person name="Schneider C."/>
            <person name="Schoenbach C."/>
            <person name="Sekiguchi K."/>
            <person name="Semple C.A."/>
            <person name="Seno S."/>
            <person name="Sessa L."/>
            <person name="Sheng Y."/>
            <person name="Shibata Y."/>
            <person name="Shimada H."/>
            <person name="Shimada K."/>
            <person name="Silva D."/>
            <person name="Sinclair B."/>
            <person name="Sperling S."/>
            <person name="Stupka E."/>
            <person name="Sugiura K."/>
            <person name="Sultana R."/>
            <person name="Takenaka Y."/>
            <person name="Taki K."/>
            <person name="Tammoja K."/>
            <person name="Tan S.L."/>
            <person name="Tang S."/>
            <person name="Taylor M.S."/>
            <person name="Tegner J."/>
            <person name="Teichmann S.A."/>
            <person name="Ueda H.R."/>
            <person name="van Nimwegen E."/>
            <person name="Verardo R."/>
            <person name="Wei C.L."/>
            <person name="Yagi K."/>
            <person name="Yamanishi H."/>
            <person name="Zabarovsky E."/>
            <person name="Zhu S."/>
            <person name="Zimmer A."/>
            <person name="Hide W."/>
            <person name="Bult C."/>
            <person name="Grimmond S.M."/>
            <person name="Teasdale R.D."/>
            <person name="Liu E.T."/>
            <person name="Brusic V."/>
            <person name="Quackenbush J."/>
            <person name="Wahlestedt C."/>
            <person name="Mattick J.S."/>
            <person name="Hume D.A."/>
            <person name="Kai C."/>
            <person name="Sasaki D."/>
            <person name="Tomaru Y."/>
            <person name="Fukuda S."/>
            <person name="Kanamori-Katayama M."/>
            <person name="Suzuki M."/>
            <person name="Aoki J."/>
            <person name="Arakawa T."/>
            <person name="Iida J."/>
            <person name="Imamura K."/>
            <person name="Itoh M."/>
            <person name="Kato T."/>
            <person name="Kawaji H."/>
            <person name="Kawagashira N."/>
            <person name="Kawashima T."/>
            <person name="Kojima M."/>
            <person name="Kondo S."/>
            <person name="Konno H."/>
            <person name="Nakano K."/>
            <person name="Ninomiya N."/>
            <person name="Nishio T."/>
            <person name="Okada M."/>
            <person name="Plessy C."/>
            <person name="Shibata K."/>
            <person name="Shiraki T."/>
            <person name="Suzuki S."/>
            <person name="Tagami M."/>
            <person name="Waki K."/>
            <person name="Watahiki A."/>
            <person name="Okamura-Oho Y."/>
            <person name="Suzuki H."/>
            <person name="Kawai J."/>
            <person name="Hayashizaki Y."/>
        </authorList>
    </citation>
    <scope>NUCLEOTIDE SEQUENCE [LARGE SCALE MRNA]</scope>
    <source>
        <strain>C57BL/6J</strain>
        <tissue>Kidney</tissue>
    </source>
</reference>
<reference key="4">
    <citation type="journal article" date="2004" name="Genome Res.">
        <title>The status, quality, and expansion of the NIH full-length cDNA project: the Mammalian Gene Collection (MGC).</title>
        <authorList>
            <consortium name="The MGC Project Team"/>
        </authorList>
    </citation>
    <scope>NUCLEOTIDE SEQUENCE [LARGE SCALE MRNA]</scope>
    <source>
        <strain>FVB/N</strain>
        <tissue>Liver</tissue>
    </source>
</reference>
<reference key="5">
    <citation type="submission" date="2007-04" db="UniProtKB">
        <authorList>
            <person name="Lubec G."/>
            <person name="Kang S.U."/>
        </authorList>
    </citation>
    <scope>PROTEIN SEQUENCE OF 34-51</scope>
    <scope>IDENTIFICATION BY MASS SPECTROMETRY</scope>
    <source>
        <strain>C57BL/6J</strain>
        <tissue>Brain</tissue>
    </source>
</reference>
<reference key="6">
    <citation type="journal article" date="2008" name="J. Proteome Res.">
        <title>Large-scale identification and evolution indexing of tyrosine phosphorylation sites from murine brain.</title>
        <authorList>
            <person name="Ballif B.A."/>
            <person name="Carey G.R."/>
            <person name="Sunyaev S.R."/>
            <person name="Gygi S.P."/>
        </authorList>
    </citation>
    <scope>PHOSPHORYLATION [LARGE SCALE ANALYSIS] AT TYR-29</scope>
    <scope>IDENTIFICATION BY MASS SPECTROMETRY [LARGE SCALE ANALYSIS]</scope>
    <source>
        <tissue>Brain</tissue>
    </source>
</reference>
<reference key="7">
    <citation type="journal article" date="2010" name="Cell">
        <title>A tissue-specific atlas of mouse protein phosphorylation and expression.</title>
        <authorList>
            <person name="Huttlin E.L."/>
            <person name="Jedrychowski M.P."/>
            <person name="Elias J.E."/>
            <person name="Goswami T."/>
            <person name="Rad R."/>
            <person name="Beausoleil S.A."/>
            <person name="Villen J."/>
            <person name="Haas W."/>
            <person name="Sowa M.E."/>
            <person name="Gygi S.P."/>
        </authorList>
    </citation>
    <scope>IDENTIFICATION BY MASS SPECTROMETRY [LARGE SCALE ANALYSIS]</scope>
    <source>
        <tissue>Brain</tissue>
        <tissue>Brown adipose tissue</tissue>
        <tissue>Heart</tissue>
        <tissue>Kidney</tissue>
        <tissue>Liver</tissue>
        <tissue>Lung</tissue>
        <tissue>Pancreas</tissue>
        <tissue>Spleen</tissue>
        <tissue>Testis</tissue>
    </source>
</reference>
<reference key="8">
    <citation type="journal article" date="2013" name="Mol. Cell">
        <title>SIRT5-mediated lysine desuccinylation impacts diverse metabolic pathways.</title>
        <authorList>
            <person name="Park J."/>
            <person name="Chen Y."/>
            <person name="Tishkoff D.X."/>
            <person name="Peng C."/>
            <person name="Tan M."/>
            <person name="Dai L."/>
            <person name="Xie Z."/>
            <person name="Zhang Y."/>
            <person name="Zwaans B.M."/>
            <person name="Skinner M.E."/>
            <person name="Lombard D.B."/>
            <person name="Zhao Y."/>
        </authorList>
    </citation>
    <scope>ACETYLATION [LARGE SCALE ANALYSIS] AT SER-2</scope>
    <scope>SUCCINYLATION [LARGE SCALE ANALYSIS] AT LYS-8; LYS-17; LYS-55; LYS-61 AND LYS-77</scope>
    <scope>CLEAVAGE OF INITIATOR METHIONINE [LARGE SCALE ANALYSIS]</scope>
    <scope>IDENTIFICATION BY MASS SPECTROMETRY [LARGE SCALE ANALYSIS]</scope>
    <source>
        <tissue>Liver</tissue>
    </source>
</reference>
<reference key="9">
    <citation type="journal article" date="2013" name="Proc. Natl. Acad. Sci. U.S.A.">
        <title>Label-free quantitative proteomics of the lysine acetylome in mitochondria identifies substrates of SIRT3 in metabolic pathways.</title>
        <authorList>
            <person name="Rardin M.J."/>
            <person name="Newman J.C."/>
            <person name="Held J.M."/>
            <person name="Cusack M.P."/>
            <person name="Sorensen D.J."/>
            <person name="Li B."/>
            <person name="Schilling B."/>
            <person name="Mooney S.D."/>
            <person name="Kahn C.R."/>
            <person name="Verdin E."/>
            <person name="Gibson B.W."/>
        </authorList>
    </citation>
    <scope>ACETYLATION [LARGE SCALE ANALYSIS] AT LYS-51 AND LYS-55</scope>
    <scope>IDENTIFICATION BY MASS SPECTROMETRY [LARGE SCALE ANALYSIS]</scope>
    <source>
        <tissue>Liver</tissue>
    </source>
</reference>
<accession>P31786</accession>
<organism>
    <name type="scientific">Mus musculus</name>
    <name type="common">Mouse</name>
    <dbReference type="NCBI Taxonomy" id="10090"/>
    <lineage>
        <taxon>Eukaryota</taxon>
        <taxon>Metazoa</taxon>
        <taxon>Chordata</taxon>
        <taxon>Craniata</taxon>
        <taxon>Vertebrata</taxon>
        <taxon>Euteleostomi</taxon>
        <taxon>Mammalia</taxon>
        <taxon>Eutheria</taxon>
        <taxon>Euarchontoglires</taxon>
        <taxon>Glires</taxon>
        <taxon>Rodentia</taxon>
        <taxon>Myomorpha</taxon>
        <taxon>Muroidea</taxon>
        <taxon>Muridae</taxon>
        <taxon>Murinae</taxon>
        <taxon>Mus</taxon>
        <taxon>Mus</taxon>
    </lineage>
</organism>
<dbReference type="EMBL" id="X61431">
    <property type="protein sequence ID" value="CAA43673.1"/>
    <property type="molecule type" value="mRNA"/>
</dbReference>
<dbReference type="EMBL" id="AK018720">
    <property type="protein sequence ID" value="BAB31366.1"/>
    <property type="molecule type" value="mRNA"/>
</dbReference>
<dbReference type="EMBL" id="AK027906">
    <property type="protein sequence ID" value="BAC25658.1"/>
    <property type="molecule type" value="mRNA"/>
</dbReference>
<dbReference type="EMBL" id="BC028874">
    <property type="protein sequence ID" value="AAH28874.1"/>
    <property type="molecule type" value="mRNA"/>
</dbReference>
<dbReference type="CCDS" id="CCDS15230.1"/>
<dbReference type="PIR" id="A60059">
    <property type="entry name" value="A60059"/>
</dbReference>
<dbReference type="RefSeq" id="NP_031856.1">
    <property type="nucleotide sequence ID" value="NM_007830.4"/>
</dbReference>
<dbReference type="SMR" id="P31786"/>
<dbReference type="BioGRID" id="199057">
    <property type="interactions" value="6"/>
</dbReference>
<dbReference type="FunCoup" id="P31786">
    <property type="interactions" value="1871"/>
</dbReference>
<dbReference type="STRING" id="10090.ENSMUSP00000114705"/>
<dbReference type="GlyGen" id="P31786">
    <property type="glycosylation" value="1 site, 1 O-linked glycan (1 site)"/>
</dbReference>
<dbReference type="iPTMnet" id="P31786"/>
<dbReference type="PhosphoSitePlus" id="P31786"/>
<dbReference type="jPOST" id="P31786"/>
<dbReference type="PaxDb" id="10090-ENSMUSP00000114705"/>
<dbReference type="PeptideAtlas" id="P31786"/>
<dbReference type="ProteomicsDB" id="286065"/>
<dbReference type="Pumba" id="P31786"/>
<dbReference type="TopDownProteomics" id="P31786"/>
<dbReference type="Antibodypedia" id="33373">
    <property type="antibodies" value="369 antibodies from 32 providers"/>
</dbReference>
<dbReference type="DNASU" id="13167"/>
<dbReference type="Ensembl" id="ENSMUST00000027634.13">
    <property type="protein sequence ID" value="ENSMUSP00000027634.7"/>
    <property type="gene ID" value="ENSMUSG00000026385.17"/>
</dbReference>
<dbReference type="GeneID" id="13167"/>
<dbReference type="KEGG" id="mmu:13167"/>
<dbReference type="UCSC" id="uc007cjf.2">
    <property type="organism name" value="mouse"/>
</dbReference>
<dbReference type="AGR" id="MGI:94865"/>
<dbReference type="CTD" id="1622"/>
<dbReference type="MGI" id="MGI:94865">
    <property type="gene designation" value="Dbi"/>
</dbReference>
<dbReference type="VEuPathDB" id="HostDB:ENSMUSG00000026385"/>
<dbReference type="eggNOG" id="KOG0817">
    <property type="taxonomic scope" value="Eukaryota"/>
</dbReference>
<dbReference type="GeneTree" id="ENSGT00940000154846"/>
<dbReference type="HOGENOM" id="CLU_118853_4_1_1"/>
<dbReference type="InParanoid" id="P31786"/>
<dbReference type="OMA" id="WEGKKGM"/>
<dbReference type="OrthoDB" id="346910at2759"/>
<dbReference type="TreeFam" id="TF335802"/>
<dbReference type="Reactome" id="R-MMU-77289">
    <property type="pathway name" value="Mitochondrial Fatty Acid Beta-Oxidation"/>
</dbReference>
<dbReference type="BioGRID-ORCS" id="13167">
    <property type="hits" value="4 hits in 76 CRISPR screens"/>
</dbReference>
<dbReference type="ChiTaRS" id="Dbi">
    <property type="organism name" value="mouse"/>
</dbReference>
<dbReference type="PRO" id="PR:P31786"/>
<dbReference type="Proteomes" id="UP000000589">
    <property type="component" value="Chromosome 1"/>
</dbReference>
<dbReference type="RNAct" id="P31786">
    <property type="molecule type" value="protein"/>
</dbReference>
<dbReference type="Bgee" id="ENSMUSG00000026385">
    <property type="expression patterns" value="Expressed in cranial nerve II and 258 other cell types or tissues"/>
</dbReference>
<dbReference type="ExpressionAtlas" id="P31786">
    <property type="expression patterns" value="baseline and differential"/>
</dbReference>
<dbReference type="GO" id="GO:0005783">
    <property type="term" value="C:endoplasmic reticulum"/>
    <property type="evidence" value="ECO:0007669"/>
    <property type="project" value="UniProtKB-SubCell"/>
</dbReference>
<dbReference type="GO" id="GO:0005615">
    <property type="term" value="C:extracellular space"/>
    <property type="evidence" value="ECO:0000266"/>
    <property type="project" value="MGI"/>
</dbReference>
<dbReference type="GO" id="GO:0005794">
    <property type="term" value="C:Golgi apparatus"/>
    <property type="evidence" value="ECO:0007669"/>
    <property type="project" value="UniProtKB-SubCell"/>
</dbReference>
<dbReference type="GO" id="GO:0005739">
    <property type="term" value="C:mitochondrion"/>
    <property type="evidence" value="ECO:0007005"/>
    <property type="project" value="MGI"/>
</dbReference>
<dbReference type="GO" id="GO:0008021">
    <property type="term" value="C:synaptic vesicle"/>
    <property type="evidence" value="ECO:0000266"/>
    <property type="project" value="MGI"/>
</dbReference>
<dbReference type="GO" id="GO:0000062">
    <property type="term" value="F:fatty-acyl-CoA binding"/>
    <property type="evidence" value="ECO:0007669"/>
    <property type="project" value="InterPro"/>
</dbReference>
<dbReference type="GO" id="GO:0001662">
    <property type="term" value="P:behavioral fear response"/>
    <property type="evidence" value="ECO:0000314"/>
    <property type="project" value="MGI"/>
</dbReference>
<dbReference type="GO" id="GO:0001942">
    <property type="term" value="P:hair follicle development"/>
    <property type="evidence" value="ECO:0000315"/>
    <property type="project" value="MGI"/>
</dbReference>
<dbReference type="GO" id="GO:0021670">
    <property type="term" value="P:lateral ventricle development"/>
    <property type="evidence" value="ECO:0000314"/>
    <property type="project" value="MGI"/>
</dbReference>
<dbReference type="GO" id="GO:0007611">
    <property type="term" value="P:learning or memory"/>
    <property type="evidence" value="ECO:0000314"/>
    <property type="project" value="MGI"/>
</dbReference>
<dbReference type="GO" id="GO:0060291">
    <property type="term" value="P:long-term synaptic potentiation"/>
    <property type="evidence" value="ECO:0000314"/>
    <property type="project" value="MGI"/>
</dbReference>
<dbReference type="GO" id="GO:0032228">
    <property type="term" value="P:regulation of synaptic transmission, GABAergic"/>
    <property type="evidence" value="ECO:0000266"/>
    <property type="project" value="MGI"/>
</dbReference>
<dbReference type="GO" id="GO:0043588">
    <property type="term" value="P:skin development"/>
    <property type="evidence" value="ECO:0000315"/>
    <property type="project" value="MGI"/>
</dbReference>
<dbReference type="GO" id="GO:0006641">
    <property type="term" value="P:triglyceride metabolic process"/>
    <property type="evidence" value="ECO:0000315"/>
    <property type="project" value="MGI"/>
</dbReference>
<dbReference type="CDD" id="cd00435">
    <property type="entry name" value="ACBP"/>
    <property type="match status" value="1"/>
</dbReference>
<dbReference type="FunFam" id="1.20.80.10:FF:000010">
    <property type="entry name" value="Acyl-CoA-binding domain-containing protein 5"/>
    <property type="match status" value="1"/>
</dbReference>
<dbReference type="Gene3D" id="1.20.80.10">
    <property type="match status" value="1"/>
</dbReference>
<dbReference type="InterPro" id="IPR022408">
    <property type="entry name" value="Acyl-CoA-binding_prot_CS"/>
</dbReference>
<dbReference type="InterPro" id="IPR000582">
    <property type="entry name" value="Acyl-CoA-binding_protein"/>
</dbReference>
<dbReference type="InterPro" id="IPR035984">
    <property type="entry name" value="Acyl-CoA-binding_sf"/>
</dbReference>
<dbReference type="InterPro" id="IPR014352">
    <property type="entry name" value="FERM/acyl-CoA-bd_prot_sf"/>
</dbReference>
<dbReference type="PANTHER" id="PTHR23310:SF54">
    <property type="entry name" value="ACYL-COA-BINDING PROTEIN"/>
    <property type="match status" value="1"/>
</dbReference>
<dbReference type="PANTHER" id="PTHR23310">
    <property type="entry name" value="ACYL-COA-BINDING PROTEIN, ACBP"/>
    <property type="match status" value="1"/>
</dbReference>
<dbReference type="Pfam" id="PF00887">
    <property type="entry name" value="ACBP"/>
    <property type="match status" value="1"/>
</dbReference>
<dbReference type="PRINTS" id="PR00689">
    <property type="entry name" value="ACOABINDINGP"/>
</dbReference>
<dbReference type="SUPFAM" id="SSF47027">
    <property type="entry name" value="Acyl-CoA binding protein"/>
    <property type="match status" value="1"/>
</dbReference>
<dbReference type="PROSITE" id="PS00880">
    <property type="entry name" value="ACB_1"/>
    <property type="match status" value="1"/>
</dbReference>
<dbReference type="PROSITE" id="PS51228">
    <property type="entry name" value="ACB_2"/>
    <property type="match status" value="1"/>
</dbReference>
<gene>
    <name type="primary">Dbi</name>
</gene>
<proteinExistence type="evidence at protein level"/>